<proteinExistence type="inferred from homology"/>
<organism>
    <name type="scientific">Emiliania huxleyi</name>
    <name type="common">Coccolithophore</name>
    <name type="synonym">Pontosphaera huxleyi</name>
    <dbReference type="NCBI Taxonomy" id="2903"/>
    <lineage>
        <taxon>Eukaryota</taxon>
        <taxon>Haptista</taxon>
        <taxon>Haptophyta</taxon>
        <taxon>Prymnesiophyceae</taxon>
        <taxon>Isochrysidales</taxon>
        <taxon>Noelaerhabdaceae</taxon>
        <taxon>Emiliania</taxon>
    </lineage>
</organism>
<feature type="chain" id="PRO_0000272897" description="Large ribosomal subunit protein uL23c">
    <location>
        <begin position="1"/>
        <end position="99"/>
    </location>
</feature>
<protein>
    <recommendedName>
        <fullName evidence="2">Large ribosomal subunit protein uL23c</fullName>
    </recommendedName>
    <alternativeName>
        <fullName>50S ribosomal protein L23, chloroplastic</fullName>
    </alternativeName>
</protein>
<sequence length="99" mass="11103">MCTSSKSLLDLIKYPILTEKTSRLIEQNQYSFAVDRKADKISIKSAVEALFDVQVVAVNTANQPLKKRRVGKFIGKKSRVKRAVVTLAPENSITFFENA</sequence>
<name>RK23_EMIHU</name>
<reference key="1">
    <citation type="journal article" date="2005" name="DNA Res.">
        <title>The complete plastid genome sequence of the haptophyte Emiliania huxleyi: a comparison to other plastid genomes.</title>
        <authorList>
            <person name="Sanchez-Puerta M.V."/>
            <person name="Bachvaroff T.R."/>
            <person name="Delwiche C.F."/>
        </authorList>
    </citation>
    <scope>NUCLEOTIDE SEQUENCE [LARGE SCALE GENOMIC DNA]</scope>
    <source>
        <strain>CCMP373 / CSIRO-CS-57 / BT6</strain>
    </source>
</reference>
<evidence type="ECO:0000250" key="1"/>
<evidence type="ECO:0000305" key="2"/>
<keyword id="KW-0150">Chloroplast</keyword>
<keyword id="KW-0934">Plastid</keyword>
<keyword id="KW-0687">Ribonucleoprotein</keyword>
<keyword id="KW-0689">Ribosomal protein</keyword>
<keyword id="KW-0694">RNA-binding</keyword>
<keyword id="KW-0699">rRNA-binding</keyword>
<comment type="function">
    <text evidence="1">Binds to 23S rRNA.</text>
</comment>
<comment type="subunit">
    <text evidence="1">Part of the 50S ribosomal subunit.</text>
</comment>
<comment type="subcellular location">
    <subcellularLocation>
        <location>Plastid</location>
        <location>Chloroplast</location>
    </subcellularLocation>
</comment>
<comment type="similarity">
    <text evidence="2">Belongs to the universal ribosomal protein uL23 family.</text>
</comment>
<geneLocation type="chloroplast"/>
<dbReference type="EMBL" id="AY741371">
    <property type="protein sequence ID" value="AAX13903.1"/>
    <property type="molecule type" value="Genomic_DNA"/>
</dbReference>
<dbReference type="RefSeq" id="YP_277404.1">
    <property type="nucleotide sequence ID" value="NC_007288.1"/>
</dbReference>
<dbReference type="SMR" id="Q4G363"/>
<dbReference type="STRING" id="2903.Q4G363"/>
<dbReference type="GeneID" id="3562488"/>
<dbReference type="GO" id="GO:0009507">
    <property type="term" value="C:chloroplast"/>
    <property type="evidence" value="ECO:0007669"/>
    <property type="project" value="UniProtKB-SubCell"/>
</dbReference>
<dbReference type="GO" id="GO:1990904">
    <property type="term" value="C:ribonucleoprotein complex"/>
    <property type="evidence" value="ECO:0007669"/>
    <property type="project" value="UniProtKB-KW"/>
</dbReference>
<dbReference type="GO" id="GO:0005840">
    <property type="term" value="C:ribosome"/>
    <property type="evidence" value="ECO:0007669"/>
    <property type="project" value="UniProtKB-KW"/>
</dbReference>
<dbReference type="GO" id="GO:0019843">
    <property type="term" value="F:rRNA binding"/>
    <property type="evidence" value="ECO:0007669"/>
    <property type="project" value="UniProtKB-UniRule"/>
</dbReference>
<dbReference type="GO" id="GO:0003735">
    <property type="term" value="F:structural constituent of ribosome"/>
    <property type="evidence" value="ECO:0007669"/>
    <property type="project" value="InterPro"/>
</dbReference>
<dbReference type="GO" id="GO:0006412">
    <property type="term" value="P:translation"/>
    <property type="evidence" value="ECO:0007669"/>
    <property type="project" value="UniProtKB-UniRule"/>
</dbReference>
<dbReference type="FunFam" id="3.30.70.330:FF:000001">
    <property type="entry name" value="50S ribosomal protein L23"/>
    <property type="match status" value="1"/>
</dbReference>
<dbReference type="Gene3D" id="3.30.70.330">
    <property type="match status" value="1"/>
</dbReference>
<dbReference type="HAMAP" id="MF_01369_B">
    <property type="entry name" value="Ribosomal_uL23_B"/>
    <property type="match status" value="1"/>
</dbReference>
<dbReference type="InterPro" id="IPR012677">
    <property type="entry name" value="Nucleotide-bd_a/b_plait_sf"/>
</dbReference>
<dbReference type="InterPro" id="IPR013025">
    <property type="entry name" value="Ribosomal_uL23-like"/>
</dbReference>
<dbReference type="InterPro" id="IPR012678">
    <property type="entry name" value="Ribosomal_uL23/eL15/eS24_sf"/>
</dbReference>
<dbReference type="InterPro" id="IPR001014">
    <property type="entry name" value="Ribosomal_uL23_CS"/>
</dbReference>
<dbReference type="NCBIfam" id="NF004363">
    <property type="entry name" value="PRK05738.2-4"/>
    <property type="match status" value="1"/>
</dbReference>
<dbReference type="NCBIfam" id="NF004368">
    <property type="entry name" value="PRK05738.3-4"/>
    <property type="match status" value="1"/>
</dbReference>
<dbReference type="PANTHER" id="PTHR11620">
    <property type="entry name" value="60S RIBOSOMAL PROTEIN L23A"/>
    <property type="match status" value="1"/>
</dbReference>
<dbReference type="Pfam" id="PF00276">
    <property type="entry name" value="Ribosomal_L23"/>
    <property type="match status" value="1"/>
</dbReference>
<dbReference type="SUPFAM" id="SSF54189">
    <property type="entry name" value="Ribosomal proteins S24e, L23 and L15e"/>
    <property type="match status" value="1"/>
</dbReference>
<dbReference type="PROSITE" id="PS00050">
    <property type="entry name" value="RIBOSOMAL_L23"/>
    <property type="match status" value="1"/>
</dbReference>
<gene>
    <name type="primary">rpl23</name>
</gene>
<accession>Q4G363</accession>